<gene>
    <name evidence="13" type="primary">lin</name>
    <name type="ORF">CG11770</name>
</gene>
<sequence>MDTSSAAGSGAGTGDVCPCSTVATSTTSASNEQPQTKRQKIEQQIKVGSKALPPQPPHPPDILDLDANSNSHLCSSLSSSSSHSLSTPSTANNSPTTTPCSSRAASYAQLLHNILPQNGDTDLHSQPESAHDEVDRAAKLPNLLTLDTTNGNGSHASSRSNCLQATTATSIDDMLEFEQSLTRQCLCGVSERTLRKPFQSHYSQDTNGQKRIAYLREWPTNKLLQFLSNLQLLFDIYLKQNAKGFICTRIMDVCDALIRNDHKLIDEIIVLAGYENSYVQFLAGRVLAAFLVIAKQELNDEWLQKIVDQLFNFEQLDQAAVQKIHFSLDIIKRIVEWKDMEIHPLDDDWMASANSTSAASSVVPLSTEASVSYMHFPVQEQPLATNYFALQFREDTEGERETGQEAPDNRDRHRRHFGEDMNVAYEPHPAPQSTTMPSGCHVVTLTDSESFDTTHLKCITIQKLEHKWPTLVKNMSELMAPTHQDAAEHCVLNFLQLWENIISVKANLSIDETRPYYAQLDKFELLLSHSLSCTVYKQMLCLFNEALCYGSTLALQDMLPEETCKLAHQIVCHVRGFRILESLPRRQPDNMVSLIGYNGKPMVYANGTITLAHAAQSGDSEEDGAPLDLIEMDKTLLQKMVLLVLKSIAVTVKEIRSDSSDSSIDSTDYDAFQDMMLIERSIRDVLSKLETFIKQTLEFHPECHFSKILIHLFDDQDDHLIEAMVCTLDVTSGISFRNNAFPELVAMLNPVYTFLEFLKMTSNSSDLLLDLLVSNETCFLLYLLRLLKYIRMNWTMFVHSCHTFGMGSAMLDEAMGVLIRLRLQISRLVSRQLYPYDISPVLRLLESCESLYEGNELS</sequence>
<reference evidence="9 11" key="1">
    <citation type="journal article" date="2000" name="Genes Dev.">
        <title>Tissue- and stage-specific modulation of Wingless signaling by the segment polarity gene lines.</title>
        <authorList>
            <person name="Hatini V."/>
            <person name="Bokor P."/>
            <person name="Goto-Mandeville R."/>
            <person name="DiNardo S."/>
        </authorList>
    </citation>
    <scope>NUCLEOTIDE SEQUENCE [MRNA]</scope>
    <scope>FUNCTION</scope>
    <scope>SUBCELLULAR LOCATION</scope>
    <scope>TISSUE SPECIFICITY</scope>
</reference>
<reference evidence="10" key="2">
    <citation type="journal article" date="2000" name="Science">
        <title>The genome sequence of Drosophila melanogaster.</title>
        <authorList>
            <person name="Adams M.D."/>
            <person name="Celniker S.E."/>
            <person name="Holt R.A."/>
            <person name="Evans C.A."/>
            <person name="Gocayne J.D."/>
            <person name="Amanatides P.G."/>
            <person name="Scherer S.E."/>
            <person name="Li P.W."/>
            <person name="Hoskins R.A."/>
            <person name="Galle R.F."/>
            <person name="George R.A."/>
            <person name="Lewis S.E."/>
            <person name="Richards S."/>
            <person name="Ashburner M."/>
            <person name="Henderson S.N."/>
            <person name="Sutton G.G."/>
            <person name="Wortman J.R."/>
            <person name="Yandell M.D."/>
            <person name="Zhang Q."/>
            <person name="Chen L.X."/>
            <person name="Brandon R.C."/>
            <person name="Rogers Y.-H.C."/>
            <person name="Blazej R.G."/>
            <person name="Champe M."/>
            <person name="Pfeiffer B.D."/>
            <person name="Wan K.H."/>
            <person name="Doyle C."/>
            <person name="Baxter E.G."/>
            <person name="Helt G."/>
            <person name="Nelson C.R."/>
            <person name="Miklos G.L.G."/>
            <person name="Abril J.F."/>
            <person name="Agbayani A."/>
            <person name="An H.-J."/>
            <person name="Andrews-Pfannkoch C."/>
            <person name="Baldwin D."/>
            <person name="Ballew R.M."/>
            <person name="Basu A."/>
            <person name="Baxendale J."/>
            <person name="Bayraktaroglu L."/>
            <person name="Beasley E.M."/>
            <person name="Beeson K.Y."/>
            <person name="Benos P.V."/>
            <person name="Berman B.P."/>
            <person name="Bhandari D."/>
            <person name="Bolshakov S."/>
            <person name="Borkova D."/>
            <person name="Botchan M.R."/>
            <person name="Bouck J."/>
            <person name="Brokstein P."/>
            <person name="Brottier P."/>
            <person name="Burtis K.C."/>
            <person name="Busam D.A."/>
            <person name="Butler H."/>
            <person name="Cadieu E."/>
            <person name="Center A."/>
            <person name="Chandra I."/>
            <person name="Cherry J.M."/>
            <person name="Cawley S."/>
            <person name="Dahlke C."/>
            <person name="Davenport L.B."/>
            <person name="Davies P."/>
            <person name="de Pablos B."/>
            <person name="Delcher A."/>
            <person name="Deng Z."/>
            <person name="Mays A.D."/>
            <person name="Dew I."/>
            <person name="Dietz S.M."/>
            <person name="Dodson K."/>
            <person name="Doup L.E."/>
            <person name="Downes M."/>
            <person name="Dugan-Rocha S."/>
            <person name="Dunkov B.C."/>
            <person name="Dunn P."/>
            <person name="Durbin K.J."/>
            <person name="Evangelista C.C."/>
            <person name="Ferraz C."/>
            <person name="Ferriera S."/>
            <person name="Fleischmann W."/>
            <person name="Fosler C."/>
            <person name="Gabrielian A.E."/>
            <person name="Garg N.S."/>
            <person name="Gelbart W.M."/>
            <person name="Glasser K."/>
            <person name="Glodek A."/>
            <person name="Gong F."/>
            <person name="Gorrell J.H."/>
            <person name="Gu Z."/>
            <person name="Guan P."/>
            <person name="Harris M."/>
            <person name="Harris N.L."/>
            <person name="Harvey D.A."/>
            <person name="Heiman T.J."/>
            <person name="Hernandez J.R."/>
            <person name="Houck J."/>
            <person name="Hostin D."/>
            <person name="Houston K.A."/>
            <person name="Howland T.J."/>
            <person name="Wei M.-H."/>
            <person name="Ibegwam C."/>
            <person name="Jalali M."/>
            <person name="Kalush F."/>
            <person name="Karpen G.H."/>
            <person name="Ke Z."/>
            <person name="Kennison J.A."/>
            <person name="Ketchum K.A."/>
            <person name="Kimmel B.E."/>
            <person name="Kodira C.D."/>
            <person name="Kraft C.L."/>
            <person name="Kravitz S."/>
            <person name="Kulp D."/>
            <person name="Lai Z."/>
            <person name="Lasko P."/>
            <person name="Lei Y."/>
            <person name="Levitsky A.A."/>
            <person name="Li J.H."/>
            <person name="Li Z."/>
            <person name="Liang Y."/>
            <person name="Lin X."/>
            <person name="Liu X."/>
            <person name="Mattei B."/>
            <person name="McIntosh T.C."/>
            <person name="McLeod M.P."/>
            <person name="McPherson D."/>
            <person name="Merkulov G."/>
            <person name="Milshina N.V."/>
            <person name="Mobarry C."/>
            <person name="Morris J."/>
            <person name="Moshrefi A."/>
            <person name="Mount S.M."/>
            <person name="Moy M."/>
            <person name="Murphy B."/>
            <person name="Murphy L."/>
            <person name="Muzny D.M."/>
            <person name="Nelson D.L."/>
            <person name="Nelson D.R."/>
            <person name="Nelson K.A."/>
            <person name="Nixon K."/>
            <person name="Nusskern D.R."/>
            <person name="Pacleb J.M."/>
            <person name="Palazzolo M."/>
            <person name="Pittman G.S."/>
            <person name="Pan S."/>
            <person name="Pollard J."/>
            <person name="Puri V."/>
            <person name="Reese M.G."/>
            <person name="Reinert K."/>
            <person name="Remington K."/>
            <person name="Saunders R.D.C."/>
            <person name="Scheeler F."/>
            <person name="Shen H."/>
            <person name="Shue B.C."/>
            <person name="Siden-Kiamos I."/>
            <person name="Simpson M."/>
            <person name="Skupski M.P."/>
            <person name="Smith T.J."/>
            <person name="Spier E."/>
            <person name="Spradling A.C."/>
            <person name="Stapleton M."/>
            <person name="Strong R."/>
            <person name="Sun E."/>
            <person name="Svirskas R."/>
            <person name="Tector C."/>
            <person name="Turner R."/>
            <person name="Venter E."/>
            <person name="Wang A.H."/>
            <person name="Wang X."/>
            <person name="Wang Z.-Y."/>
            <person name="Wassarman D.A."/>
            <person name="Weinstock G.M."/>
            <person name="Weissenbach J."/>
            <person name="Williams S.M."/>
            <person name="Woodage T."/>
            <person name="Worley K.C."/>
            <person name="Wu D."/>
            <person name="Yang S."/>
            <person name="Yao Q.A."/>
            <person name="Ye J."/>
            <person name="Yeh R.-F."/>
            <person name="Zaveri J.S."/>
            <person name="Zhan M."/>
            <person name="Zhang G."/>
            <person name="Zhao Q."/>
            <person name="Zheng L."/>
            <person name="Zheng X.H."/>
            <person name="Zhong F.N."/>
            <person name="Zhong W."/>
            <person name="Zhou X."/>
            <person name="Zhu S.C."/>
            <person name="Zhu X."/>
            <person name="Smith H.O."/>
            <person name="Gibbs R.A."/>
            <person name="Myers E.W."/>
            <person name="Rubin G.M."/>
            <person name="Venter J.C."/>
        </authorList>
    </citation>
    <scope>NUCLEOTIDE SEQUENCE [LARGE SCALE GENOMIC DNA]</scope>
    <source>
        <strain evidence="2">Berkeley</strain>
    </source>
</reference>
<reference evidence="9 10" key="3">
    <citation type="journal article" date="2002" name="Genome Biol.">
        <title>Annotation of the Drosophila melanogaster euchromatic genome: a systematic review.</title>
        <authorList>
            <person name="Misra S."/>
            <person name="Crosby M.A."/>
            <person name="Mungall C.J."/>
            <person name="Matthews B.B."/>
            <person name="Campbell K.S."/>
            <person name="Hradecky P."/>
            <person name="Huang Y."/>
            <person name="Kaminker J.S."/>
            <person name="Millburn G.H."/>
            <person name="Prochnik S.E."/>
            <person name="Smith C.D."/>
            <person name="Tupy J.L."/>
            <person name="Whitfield E.J."/>
            <person name="Bayraktaroglu L."/>
            <person name="Berman B.P."/>
            <person name="Bettencourt B.R."/>
            <person name="Celniker S.E."/>
            <person name="de Grey A.D.N.J."/>
            <person name="Drysdale R.A."/>
            <person name="Harris N.L."/>
            <person name="Richter J."/>
            <person name="Russo S."/>
            <person name="Schroeder A.J."/>
            <person name="Shu S.Q."/>
            <person name="Stapleton M."/>
            <person name="Yamada C."/>
            <person name="Ashburner M."/>
            <person name="Gelbart W.M."/>
            <person name="Rubin G.M."/>
            <person name="Lewis S.E."/>
        </authorList>
    </citation>
    <scope>GENOME REANNOTATION</scope>
    <source>
        <strain>Berkeley</strain>
    </source>
</reference>
<reference evidence="12" key="4">
    <citation type="submission" date="2005-03" db="EMBL/GenBank/DDBJ databases">
        <authorList>
            <person name="Stapleton M."/>
            <person name="Carlson J.W."/>
            <person name="Chavez C."/>
            <person name="Frise E."/>
            <person name="George R.A."/>
            <person name="Pacleb J.M."/>
            <person name="Park S."/>
            <person name="Wan K.H."/>
            <person name="Yu C."/>
            <person name="Rubin G.M."/>
            <person name="Celniker S.E."/>
        </authorList>
    </citation>
    <scope>NUCLEOTIDE SEQUENCE [LARGE SCALE MRNA]</scope>
    <source>
        <strain evidence="12">Berkeley</strain>
        <tissue>Embryo</tissue>
    </source>
</reference>
<reference evidence="9" key="5">
    <citation type="journal article" date="1996" name="Development">
        <title>The roles of hedgehog, wingless and lines in patterning the dorsal epidermis in Drosophila.</title>
        <authorList>
            <person name="Bokor P."/>
            <person name="DiNardo S."/>
        </authorList>
    </citation>
    <scope>FUNCTION</scope>
</reference>
<reference evidence="9" key="6">
    <citation type="journal article" date="1998" name="Development">
        <title>The lines gene of Drosophila is required for specific functions of the Abdominal-B HOX protein.</title>
        <authorList>
            <person name="Castelli-Gair J."/>
        </authorList>
    </citation>
    <scope>FUNCTION</scope>
</reference>
<reference evidence="9" key="7">
    <citation type="journal article" date="2001" name="Dev. Biol.">
        <title>Drumstick, bowl, and lines are required for patterning and cell rearrangement in the Drosophila embryonic hindgut.</title>
        <authorList>
            <person name="Iwaki D.D."/>
            <person name="Johansen K.A."/>
            <person name="Singer J.B."/>
            <person name="Lengyel J.A."/>
        </authorList>
    </citation>
    <scope>FUNCTION</scope>
    <scope>TISSUE SPECIFICITY</scope>
</reference>
<reference evidence="9" key="8">
    <citation type="journal article" date="2002" name="Development">
        <title>Drumstick is a zinc finger protein that antagonizes Lines to control patterning and morphogenesis of the Drosophila hindgut.</title>
        <authorList>
            <person name="Green R.B."/>
            <person name="Hatini V."/>
            <person name="Johansen K.A."/>
            <person name="Liu X.-J."/>
            <person name="Lengyel J.A."/>
        </authorList>
    </citation>
    <scope>INTERACTION WITH DRM</scope>
</reference>
<reference evidence="9" key="9">
    <citation type="journal article" date="2003" name="Mech. Dev.">
        <title>The Drm-Bowl-Lin relief-of-repression hierarchy controls fore- and hindgut patterning and morphogenesis.</title>
        <authorList>
            <person name="Johansen K.A."/>
            <person name="Green R.B."/>
            <person name="Iwaki D.D."/>
            <person name="Hernandez J.B."/>
            <person name="Lengyel J.A."/>
        </authorList>
    </citation>
    <scope>FUNCTION</scope>
</reference>
<proteinExistence type="evidence at protein level"/>
<protein>
    <recommendedName>
        <fullName>Protein lines</fullName>
    </recommendedName>
</protein>
<keyword id="KW-0010">Activator</keyword>
<keyword id="KW-0963">Cytoplasm</keyword>
<keyword id="KW-0217">Developmental protein</keyword>
<keyword id="KW-0539">Nucleus</keyword>
<keyword id="KW-1185">Reference proteome</keyword>
<keyword id="KW-0678">Repressor</keyword>
<keyword id="KW-0709">Segmentation polarity protein</keyword>
<keyword id="KW-0804">Transcription</keyword>
<keyword id="KW-0805">Transcription regulation</keyword>
<keyword id="KW-0879">Wnt signaling pathway</keyword>
<accession>Q9V4Z9</accession>
<evidence type="ECO:0000256" key="1">
    <source>
        <dbReference type="SAM" id="MobiDB-lite"/>
    </source>
</evidence>
<evidence type="ECO:0000269" key="2">
    <source>
    </source>
</evidence>
<evidence type="ECO:0000269" key="3">
    <source>
    </source>
</evidence>
<evidence type="ECO:0000269" key="4">
    <source>
    </source>
</evidence>
<evidence type="ECO:0000269" key="5">
    <source>
    </source>
</evidence>
<evidence type="ECO:0000269" key="6">
    <source>
    </source>
</evidence>
<evidence type="ECO:0000269" key="7">
    <source>
    </source>
</evidence>
<evidence type="ECO:0000269" key="8">
    <source>
    </source>
</evidence>
<evidence type="ECO:0000305" key="9"/>
<evidence type="ECO:0000312" key="10">
    <source>
        <dbReference type="EMBL" id="AAF59024.1"/>
    </source>
</evidence>
<evidence type="ECO:0000312" key="11">
    <source>
        <dbReference type="EMBL" id="AAF76228.1"/>
    </source>
</evidence>
<evidence type="ECO:0000312" key="12">
    <source>
        <dbReference type="EMBL" id="AAX33526.1"/>
    </source>
</evidence>
<evidence type="ECO:0000312" key="13">
    <source>
        <dbReference type="FlyBase" id="FBgn0002552"/>
    </source>
</evidence>
<organism>
    <name type="scientific">Drosophila melanogaster</name>
    <name type="common">Fruit fly</name>
    <dbReference type="NCBI Taxonomy" id="7227"/>
    <lineage>
        <taxon>Eukaryota</taxon>
        <taxon>Metazoa</taxon>
        <taxon>Ecdysozoa</taxon>
        <taxon>Arthropoda</taxon>
        <taxon>Hexapoda</taxon>
        <taxon>Insecta</taxon>
        <taxon>Pterygota</taxon>
        <taxon>Neoptera</taxon>
        <taxon>Endopterygota</taxon>
        <taxon>Diptera</taxon>
        <taxon>Brachycera</taxon>
        <taxon>Muscomorpha</taxon>
        <taxon>Ephydroidea</taxon>
        <taxon>Drosophilidae</taxon>
        <taxon>Drosophila</taxon>
        <taxon>Sophophora</taxon>
    </lineage>
</organism>
<dbReference type="EMBL" id="AF272358">
    <property type="protein sequence ID" value="AAF76228.1"/>
    <property type="molecule type" value="mRNA"/>
</dbReference>
<dbReference type="EMBL" id="AE013599">
    <property type="protein sequence ID" value="AAF59024.1"/>
    <property type="molecule type" value="Genomic_DNA"/>
</dbReference>
<dbReference type="EMBL" id="BT021378">
    <property type="protein sequence ID" value="AAX33526.1"/>
    <property type="molecule type" value="mRNA"/>
</dbReference>
<dbReference type="RefSeq" id="NP_524815.1">
    <property type="nucleotide sequence ID" value="NM_080076.3"/>
</dbReference>
<dbReference type="SMR" id="Q9V4Z9"/>
<dbReference type="BioGRID" id="69592">
    <property type="interactions" value="7"/>
</dbReference>
<dbReference type="FunCoup" id="Q9V4Z9">
    <property type="interactions" value="682"/>
</dbReference>
<dbReference type="IntAct" id="Q9V4Z9">
    <property type="interactions" value="2"/>
</dbReference>
<dbReference type="STRING" id="7227.FBpp0087732"/>
<dbReference type="PaxDb" id="7227-FBpp0087732"/>
<dbReference type="DNASU" id="45325"/>
<dbReference type="EnsemblMetazoa" id="FBtr0088651">
    <property type="protein sequence ID" value="FBpp0087732"/>
    <property type="gene ID" value="FBgn0002552"/>
</dbReference>
<dbReference type="GeneID" id="45325"/>
<dbReference type="KEGG" id="dme:Dmel_CG11770"/>
<dbReference type="UCSC" id="CG11770-RA">
    <property type="organism name" value="d. melanogaster"/>
</dbReference>
<dbReference type="AGR" id="FB:FBgn0002552"/>
<dbReference type="CTD" id="45325"/>
<dbReference type="FlyBase" id="FBgn0002552">
    <property type="gene designation" value="lin"/>
</dbReference>
<dbReference type="VEuPathDB" id="VectorBase:FBgn0002552"/>
<dbReference type="eggNOG" id="ENOG502QT6F">
    <property type="taxonomic scope" value="Eukaryota"/>
</dbReference>
<dbReference type="GeneTree" id="ENSGT00390000001790"/>
<dbReference type="HOGENOM" id="CLU_009492_0_0_1"/>
<dbReference type="InParanoid" id="Q9V4Z9"/>
<dbReference type="OMA" id="KLEHKWP"/>
<dbReference type="OrthoDB" id="8251209at2759"/>
<dbReference type="PhylomeDB" id="Q9V4Z9"/>
<dbReference type="SignaLink" id="Q9V4Z9"/>
<dbReference type="BioGRID-ORCS" id="45325">
    <property type="hits" value="0 hits in 1 CRISPR screen"/>
</dbReference>
<dbReference type="GenomeRNAi" id="45325"/>
<dbReference type="PRO" id="PR:Q9V4Z9"/>
<dbReference type="Proteomes" id="UP000000803">
    <property type="component" value="Chromosome 2R"/>
</dbReference>
<dbReference type="Bgee" id="FBgn0002552">
    <property type="expression patterns" value="Expressed in egg cell and 29 other cell types or tissues"/>
</dbReference>
<dbReference type="ExpressionAtlas" id="Q9V4Z9">
    <property type="expression patterns" value="baseline and differential"/>
</dbReference>
<dbReference type="GO" id="GO:0005737">
    <property type="term" value="C:cytoplasm"/>
    <property type="evidence" value="ECO:0000314"/>
    <property type="project" value="FlyBase"/>
</dbReference>
<dbReference type="GO" id="GO:0005634">
    <property type="term" value="C:nucleus"/>
    <property type="evidence" value="ECO:0000314"/>
    <property type="project" value="FlyBase"/>
</dbReference>
<dbReference type="GO" id="GO:0048617">
    <property type="term" value="P:embryonic foregut morphogenesis"/>
    <property type="evidence" value="ECO:0000315"/>
    <property type="project" value="UniProtKB"/>
</dbReference>
<dbReference type="GO" id="GO:0048619">
    <property type="term" value="P:embryonic hindgut morphogenesis"/>
    <property type="evidence" value="ECO:0000315"/>
    <property type="project" value="UniProtKB"/>
</dbReference>
<dbReference type="GO" id="GO:0009880">
    <property type="term" value="P:embryonic pattern specification"/>
    <property type="evidence" value="ECO:0000315"/>
    <property type="project" value="UniProtKB"/>
</dbReference>
<dbReference type="GO" id="GO:0008544">
    <property type="term" value="P:epidermis development"/>
    <property type="evidence" value="ECO:0000315"/>
    <property type="project" value="FlyBase"/>
</dbReference>
<dbReference type="GO" id="GO:0007440">
    <property type="term" value="P:foregut morphogenesis"/>
    <property type="evidence" value="ECO:0000315"/>
    <property type="project" value="FlyBase"/>
</dbReference>
<dbReference type="GO" id="GO:0007442">
    <property type="term" value="P:hindgut morphogenesis"/>
    <property type="evidence" value="ECO:0000315"/>
    <property type="project" value="FlyBase"/>
</dbReference>
<dbReference type="GO" id="GO:0045944">
    <property type="term" value="P:positive regulation of transcription by RNA polymerase II"/>
    <property type="evidence" value="ECO:0000315"/>
    <property type="project" value="UniProtKB"/>
</dbReference>
<dbReference type="GO" id="GO:0009946">
    <property type="term" value="P:proximal/distal axis specification"/>
    <property type="evidence" value="ECO:0000315"/>
    <property type="project" value="FlyBase"/>
</dbReference>
<dbReference type="GO" id="GO:0007367">
    <property type="term" value="P:segment polarity determination"/>
    <property type="evidence" value="ECO:0007669"/>
    <property type="project" value="UniProtKB-KW"/>
</dbReference>
<dbReference type="GO" id="GO:0035277">
    <property type="term" value="P:spiracle morphogenesis, open tracheal system"/>
    <property type="evidence" value="ECO:0000315"/>
    <property type="project" value="UniProtKB"/>
</dbReference>
<dbReference type="GO" id="GO:0035220">
    <property type="term" value="P:wing disc development"/>
    <property type="evidence" value="ECO:0000315"/>
    <property type="project" value="FlyBase"/>
</dbReference>
<dbReference type="GO" id="GO:0016055">
    <property type="term" value="P:Wnt signaling pathway"/>
    <property type="evidence" value="ECO:0007669"/>
    <property type="project" value="UniProtKB-KW"/>
</dbReference>
<dbReference type="InterPro" id="IPR029415">
    <property type="entry name" value="Lines_C"/>
</dbReference>
<dbReference type="InterPro" id="IPR032794">
    <property type="entry name" value="LINES_N"/>
</dbReference>
<dbReference type="InterPro" id="IPR024875">
    <property type="entry name" value="Protein_Lines"/>
</dbReference>
<dbReference type="PANTHER" id="PTHR16057:SF1">
    <property type="entry name" value="PROTEIN LINES HOMOLOG 1"/>
    <property type="match status" value="1"/>
</dbReference>
<dbReference type="PANTHER" id="PTHR16057">
    <property type="entry name" value="WINS1, 2 PROTEIN"/>
    <property type="match status" value="1"/>
</dbReference>
<dbReference type="Pfam" id="PF14695">
    <property type="entry name" value="LINES_C"/>
    <property type="match status" value="1"/>
</dbReference>
<dbReference type="Pfam" id="PF14694">
    <property type="entry name" value="LINES_N"/>
    <property type="match status" value="1"/>
</dbReference>
<comment type="function">
    <text evidence="3 4 6 7 8">Has a dual role as a segment polarity protein and as a modulator of the Abd-B protein. Required for Abd-B to activate the transcription of genes (including ems, cut and sal) that are involved in posterior spiracle morphogenesis. Also required for Abd-B to form an eighth abdominal denticle belt. Acts in a hierarchy downstream of drm and upstream of bowl during foregut and hindgut patterning and morphogenesis. Involved in cell rearrangement during elongation of the embryonic hindgut. Required to regulate expression of embryonic hindgut patterning genes in order to establish the large intestine and at least some rectum, and to repress small intestine fate. Required for late wingless (wg)-dependent cell fate specification in the dorsal embryonic epidermis. Acts in concert with wg to regulate expression of wg itself and also to regulate wg-target genes. May have a role in ventral epidermal patterning, independent of wg signaling.</text>
</comment>
<comment type="subunit">
    <text evidence="5">Interacts with drm.</text>
</comment>
<comment type="subcellular location">
    <subcellularLocation>
        <location evidence="3">Cytoplasm</location>
    </subcellularLocation>
    <subcellularLocation>
        <location evidence="3">Nucleus</location>
    </subcellularLocation>
    <text>Cytoplasmic in the half of the parasegment, posterior to the engrailed (en) domain, and nuclear in the half of the parasegment anterior to the en domain.</text>
</comment>
<comment type="tissue specificity">
    <text evidence="3 4">Expressed throughout the embryo, including the hindgut, posterior midgut and embryonic epidermis.</text>
</comment>
<comment type="similarity">
    <text evidence="9">Belongs to the protein lines family.</text>
</comment>
<name>LINES_DROME</name>
<feature type="chain" id="PRO_0000084437" description="Protein lines">
    <location>
        <begin position="1"/>
        <end position="858"/>
    </location>
</feature>
<feature type="region of interest" description="Disordered" evidence="1">
    <location>
        <begin position="1"/>
        <end position="102"/>
    </location>
</feature>
<feature type="compositionally biased region" description="Low complexity" evidence="1">
    <location>
        <begin position="20"/>
        <end position="30"/>
    </location>
</feature>
<feature type="compositionally biased region" description="Low complexity" evidence="1">
    <location>
        <begin position="65"/>
        <end position="102"/>
    </location>
</feature>